<reference key="1">
    <citation type="journal article" date="2010" name="J. Bacteriol.">
        <title>Complete genome sequence of Methanothermobacter marburgensis, a methanoarchaeon model organism.</title>
        <authorList>
            <person name="Liesegang H."/>
            <person name="Kaster A.K."/>
            <person name="Wiezer A."/>
            <person name="Goenrich M."/>
            <person name="Wollherr A."/>
            <person name="Seedorf H."/>
            <person name="Gottschalk G."/>
            <person name="Thauer R.K."/>
        </authorList>
    </citation>
    <scope>NUCLEOTIDE SEQUENCE [LARGE SCALE GENOMIC DNA]</scope>
    <source>
        <strain>ATCC BAA-927 / DSM 2133 / JCM 14651 / NBRC 100331 / OCM 82 / Marburg</strain>
    </source>
</reference>
<reference key="2">
    <citation type="journal article" date="1990" name="Eur. J. Biochem.">
        <title>Two genetically distinct methyl-coenzyme M reductases in Methanobacterium thermoautotrophicum strain Marburg and delta H.</title>
        <authorList>
            <person name="Rospert S."/>
            <person name="Linder D."/>
            <person name="Ellermann J."/>
            <person name="Thauer R.K."/>
        </authorList>
    </citation>
    <scope>PROTEIN SEQUENCE OF 2-15</scope>
    <scope>FUNCTION</scope>
    <scope>CATALYTIC ACTIVITY</scope>
    <scope>SUBUNIT</scope>
    <scope>DEVELOPMENTAL STAGE</scope>
    <source>
        <strain>ATCC BAA-927 / DSM 2133 / JCM 14651 / NBRC 100331 / OCM 82 / Marburg</strain>
    </source>
</reference>
<reference evidence="6" key="3">
    <citation type="journal article" date="2016" name="Angew. Chem. Int. Ed. Engl.">
        <title>Didehydroaspartate Modification in Methyl-CoenzymeM Reductase Catalyzing Methane Formation.</title>
        <authorList>
            <person name="Wagner T."/>
            <person name="Kahnt J."/>
            <person name="Ermler U."/>
            <person name="Shima S."/>
        </authorList>
    </citation>
    <scope>X-RAY CRYSTALLOGRAPHY (2.15 ANGSTROMS) IN COMPLEX WITH COENZYME F430; COENZYME B; COENZYME M AND MCR SUBUNITS ALPHA AND BETA</scope>
    <scope>COFACTOR</scope>
    <scope>SUBUNIT</scope>
    <source>
        <strain>ATCC BAA-927 / DSM 2133 / JCM 14651 / NBRC 100331 / OCM 82 / Marburg</strain>
    </source>
</reference>
<accession>P58816</accession>
<accession>D9PXZ4</accession>
<gene>
    <name type="primary">mrtG</name>
    <name type="ordered locus">MTBMA_c15130</name>
</gene>
<sequence length="265" mass="30535">MSYKAQYTPGETQIAENRRKHMDPDYEFRKLREVSDEDLVKVLGHRNPGESYKSVHPPLDEMDFEEDIVRDMVEPIQGAKEGVRVRYIQFADSMYNAPAQPYDRARTYMWRYRGVDTGTLSGRQVIEMRELDLEGVSKELVETELFDPATTGIRGATVHGHSLRLDENGLMFDALQRYVFDEEKGHVVYVKDQVGRPLDEPVDMGQPLGEDELKKITTIYRKDNIAMRDDKEAIEVVENIHTGRTLGGFGMDVFKDDLRKRLGDD</sequence>
<keyword id="KW-0002">3D-structure</keyword>
<keyword id="KW-0903">Direct protein sequencing</keyword>
<keyword id="KW-0484">Methanogenesis</keyword>
<keyword id="KW-0808">Transferase</keyword>
<protein>
    <recommendedName>
        <fullName evidence="3">Methyl-coenzyme M reductase II subunit gamma</fullName>
        <shortName evidence="3">MCR II gamma</shortName>
        <ecNumber evidence="1">2.8.4.1</ecNumber>
    </recommendedName>
</protein>
<evidence type="ECO:0000269" key="1">
    <source>
    </source>
</evidence>
<evidence type="ECO:0000269" key="2">
    <source>
    </source>
</evidence>
<evidence type="ECO:0000303" key="3">
    <source>
    </source>
</evidence>
<evidence type="ECO:0000305" key="4"/>
<evidence type="ECO:0000305" key="5">
    <source>
    </source>
</evidence>
<evidence type="ECO:0007744" key="6">
    <source>
        <dbReference type="PDB" id="5A8R"/>
    </source>
</evidence>
<evidence type="ECO:0007829" key="7">
    <source>
        <dbReference type="PDB" id="5A8R"/>
    </source>
</evidence>
<name>MCRZ_METTM</name>
<feature type="initiator methionine" description="Removed" evidence="1">
    <location>
        <position position="1"/>
    </location>
</feature>
<feature type="chain" id="PRO_0000147481" description="Methyl-coenzyme M reductase II subunit gamma">
    <location>
        <begin position="2"/>
        <end position="265"/>
    </location>
</feature>
<feature type="binding site" evidence="2 6">
    <location>
        <position position="123"/>
    </location>
    <ligand>
        <name>coenzyme M</name>
        <dbReference type="ChEBI" id="CHEBI:58319"/>
    </ligand>
</feature>
<feature type="helix" evidence="7">
    <location>
        <begin position="13"/>
        <end position="22"/>
    </location>
</feature>
<feature type="helix" evidence="7">
    <location>
        <begin position="36"/>
        <end position="43"/>
    </location>
</feature>
<feature type="strand" evidence="7">
    <location>
        <begin position="54"/>
        <end position="56"/>
    </location>
</feature>
<feature type="helix" evidence="7">
    <location>
        <begin position="59"/>
        <end position="61"/>
    </location>
</feature>
<feature type="helix" evidence="7">
    <location>
        <begin position="68"/>
        <end position="71"/>
    </location>
</feature>
<feature type="helix" evidence="7">
    <location>
        <begin position="77"/>
        <end position="80"/>
    </location>
</feature>
<feature type="strand" evidence="7">
    <location>
        <begin position="85"/>
        <end position="92"/>
    </location>
</feature>
<feature type="turn" evidence="7">
    <location>
        <begin position="94"/>
        <end position="96"/>
    </location>
</feature>
<feature type="helix" evidence="7">
    <location>
        <begin position="101"/>
        <end position="111"/>
    </location>
</feature>
<feature type="strand" evidence="7">
    <location>
        <begin position="116"/>
        <end position="119"/>
    </location>
</feature>
<feature type="strand" evidence="7">
    <location>
        <begin position="124"/>
        <end position="129"/>
    </location>
</feature>
<feature type="helix" evidence="7">
    <location>
        <begin position="130"/>
        <end position="142"/>
    </location>
</feature>
<feature type="turn" evidence="7">
    <location>
        <begin position="148"/>
        <end position="150"/>
    </location>
</feature>
<feature type="strand" evidence="7">
    <location>
        <begin position="151"/>
        <end position="153"/>
    </location>
</feature>
<feature type="strand" evidence="7">
    <location>
        <begin position="177"/>
        <end position="181"/>
    </location>
</feature>
<feature type="turn" evidence="7">
    <location>
        <begin position="182"/>
        <end position="185"/>
    </location>
</feature>
<feature type="strand" evidence="7">
    <location>
        <begin position="186"/>
        <end position="191"/>
    </location>
</feature>
<feature type="strand" evidence="7">
    <location>
        <begin position="197"/>
        <end position="203"/>
    </location>
</feature>
<feature type="helix" evidence="7">
    <location>
        <begin position="210"/>
        <end position="216"/>
    </location>
</feature>
<feature type="helix" evidence="7">
    <location>
        <begin position="227"/>
        <end position="229"/>
    </location>
</feature>
<feature type="helix" evidence="7">
    <location>
        <begin position="231"/>
        <end position="249"/>
    </location>
</feature>
<feature type="turn" evidence="7">
    <location>
        <begin position="251"/>
        <end position="254"/>
    </location>
</feature>
<feature type="helix" evidence="7">
    <location>
        <begin position="255"/>
        <end position="262"/>
    </location>
</feature>
<proteinExistence type="evidence at protein level"/>
<organism>
    <name type="scientific">Methanothermobacter marburgensis (strain ATCC BAA-927 / DSM 2133 / JCM 14651 / NBRC 100331 / OCM 82 / Marburg)</name>
    <name type="common">Methanobacterium thermoautotrophicum</name>
    <dbReference type="NCBI Taxonomy" id="79929"/>
    <lineage>
        <taxon>Archaea</taxon>
        <taxon>Methanobacteriati</taxon>
        <taxon>Methanobacteriota</taxon>
        <taxon>Methanomada group</taxon>
        <taxon>Methanobacteria</taxon>
        <taxon>Methanobacteriales</taxon>
        <taxon>Methanobacteriaceae</taxon>
        <taxon>Methanothermobacter</taxon>
    </lineage>
</organism>
<dbReference type="EC" id="2.8.4.1" evidence="1"/>
<dbReference type="EMBL" id="CP001710">
    <property type="protein sequence ID" value="ADL59092.1"/>
    <property type="molecule type" value="Genomic_DNA"/>
</dbReference>
<dbReference type="PIR" id="E69017">
    <property type="entry name" value="E69017"/>
</dbReference>
<dbReference type="RefSeq" id="WP_013296303.1">
    <property type="nucleotide sequence ID" value="NC_014408.1"/>
</dbReference>
<dbReference type="PDB" id="5A8R">
    <property type="method" value="X-ray"/>
    <property type="resolution" value="2.15 A"/>
    <property type="chains" value="C/F/I/L=1-265"/>
</dbReference>
<dbReference type="PDBsum" id="5A8R"/>
<dbReference type="SMR" id="P58816"/>
<dbReference type="STRING" id="79929.MTBMA_c15130"/>
<dbReference type="PaxDb" id="79929-MTBMA_c15130"/>
<dbReference type="GeneID" id="86199445"/>
<dbReference type="GeneID" id="9705222"/>
<dbReference type="KEGG" id="mmg:MTBMA_c15130"/>
<dbReference type="PATRIC" id="fig|79929.8.peg.1466"/>
<dbReference type="HOGENOM" id="CLU_1092436_0_0_2"/>
<dbReference type="OrthoDB" id="52520at2157"/>
<dbReference type="UniPathway" id="UPA00646">
    <property type="reaction ID" value="UER00699"/>
</dbReference>
<dbReference type="Proteomes" id="UP000000345">
    <property type="component" value="Chromosome"/>
</dbReference>
<dbReference type="GO" id="GO:0050524">
    <property type="term" value="F:coenzyme-B sulfoethylthiotransferase activity"/>
    <property type="evidence" value="ECO:0007669"/>
    <property type="project" value="UniProtKB-EC"/>
</dbReference>
<dbReference type="GO" id="GO:0015948">
    <property type="term" value="P:methanogenesis"/>
    <property type="evidence" value="ECO:0007669"/>
    <property type="project" value="UniProtKB-KW"/>
</dbReference>
<dbReference type="CDD" id="cd00539">
    <property type="entry name" value="MCR_gamma"/>
    <property type="match status" value="1"/>
</dbReference>
<dbReference type="Gene3D" id="3.90.320.20">
    <property type="entry name" value="Methyl-coenzyme M reductase, gamma subunit"/>
    <property type="match status" value="1"/>
</dbReference>
<dbReference type="InterPro" id="IPR009024">
    <property type="entry name" value="Me_CoM_Rdtase_Fd-like_fold"/>
</dbReference>
<dbReference type="InterPro" id="IPR003178">
    <property type="entry name" value="Me_CoM_Rdtase_gsu"/>
</dbReference>
<dbReference type="InterPro" id="IPR036994">
    <property type="entry name" value="Me_CoM_Rdtase_gsu_sf"/>
</dbReference>
<dbReference type="NCBIfam" id="TIGR03259">
    <property type="entry name" value="met_CoM_red_gam"/>
    <property type="match status" value="1"/>
</dbReference>
<dbReference type="Pfam" id="PF02240">
    <property type="entry name" value="MCR_gamma"/>
    <property type="match status" value="1"/>
</dbReference>
<dbReference type="PIRSF" id="PIRSF000264">
    <property type="entry name" value="Meth_CoM_rd_gama"/>
    <property type="match status" value="1"/>
</dbReference>
<dbReference type="SUPFAM" id="SSF55088">
    <property type="entry name" value="Methyl-coenzyme M reductase subunits"/>
    <property type="match status" value="1"/>
</dbReference>
<comment type="function">
    <text evidence="1">Component of the methyl-coenzyme M reductase (MCR) I that catalyzes the reductive cleavage of methyl-coenzyme M (CoM-S-CH3 or 2-(methylthio)ethanesulfonate) using coenzyme B (CoB or 7-mercaptoheptanoylthreonine phosphate) as reductant which results in the production of methane and the mixed heterodisulfide of CoB and CoM (CoM-S-S-CoB). This is the final step in methanogenesis.</text>
</comment>
<comment type="catalytic activity">
    <reaction evidence="1">
        <text>coenzyme B + methyl-coenzyme M = methane + coenzyme M-coenzyme B heterodisulfide</text>
        <dbReference type="Rhea" id="RHEA:12532"/>
        <dbReference type="ChEBI" id="CHEBI:16183"/>
        <dbReference type="ChEBI" id="CHEBI:58286"/>
        <dbReference type="ChEBI" id="CHEBI:58411"/>
        <dbReference type="ChEBI" id="CHEBI:58596"/>
        <dbReference type="EC" id="2.8.4.1"/>
    </reaction>
    <physiologicalReaction direction="left-to-right" evidence="5">
        <dbReference type="Rhea" id="RHEA:12533"/>
    </physiologicalReaction>
</comment>
<comment type="cofactor">
    <cofactor evidence="2">
        <name>coenzyme F430</name>
        <dbReference type="ChEBI" id="CHEBI:60540"/>
    </cofactor>
    <text evidence="2">Binds 2 coenzyme F430 non-covalently per MCR complex. Coenzyme F430 is a yellow nickel porphinoid.</text>
</comment>
<comment type="pathway">
    <text evidence="5">One-carbon metabolism; methyl-coenzyme M reduction; methane from methyl-coenzyme M: step 1/1.</text>
</comment>
<comment type="subunit">
    <text evidence="1 2">MCR is a hexamer of two alpha, two beta, and two gamma chains, forming a dimer of heterotrimers.</text>
</comment>
<comment type="developmental stage">
    <text evidence="1">There are two MCR complexes in this bacteria. MCR II is expressed in the early growth phase. Late growth cells contain mostly MCR I.</text>
</comment>
<comment type="similarity">
    <text evidence="4">Belongs to the methyl-coenzyme M reductase gamma subunit family.</text>
</comment>